<organism>
    <name type="scientific">Burkholderia ambifaria (strain MC40-6)</name>
    <dbReference type="NCBI Taxonomy" id="398577"/>
    <lineage>
        <taxon>Bacteria</taxon>
        <taxon>Pseudomonadati</taxon>
        <taxon>Pseudomonadota</taxon>
        <taxon>Betaproteobacteria</taxon>
        <taxon>Burkholderiales</taxon>
        <taxon>Burkholderiaceae</taxon>
        <taxon>Burkholderia</taxon>
        <taxon>Burkholderia cepacia complex</taxon>
    </lineage>
</organism>
<comment type="function">
    <text evidence="1">Catalyzes the reduction of hydroxylamine to form NH(3) and H(2)O.</text>
</comment>
<comment type="catalytic activity">
    <reaction evidence="1">
        <text>A + NH4(+) + H2O = hydroxylamine + AH2 + H(+)</text>
        <dbReference type="Rhea" id="RHEA:22052"/>
        <dbReference type="ChEBI" id="CHEBI:13193"/>
        <dbReference type="ChEBI" id="CHEBI:15377"/>
        <dbReference type="ChEBI" id="CHEBI:15378"/>
        <dbReference type="ChEBI" id="CHEBI:15429"/>
        <dbReference type="ChEBI" id="CHEBI:17499"/>
        <dbReference type="ChEBI" id="CHEBI:28938"/>
        <dbReference type="EC" id="1.7.99.1"/>
    </reaction>
</comment>
<comment type="cofactor">
    <cofactor evidence="1">
        <name>[4Fe-4S] cluster</name>
        <dbReference type="ChEBI" id="CHEBI:49883"/>
    </cofactor>
    <text evidence="1">Binds 1 [4Fe-4S] cluster.</text>
</comment>
<comment type="cofactor">
    <cofactor evidence="1">
        <name>hybrid [4Fe-2O-2S] cluster</name>
        <dbReference type="ChEBI" id="CHEBI:60519"/>
    </cofactor>
    <text evidence="1">Binds 1 hybrid [4Fe-2O-2S] cluster.</text>
</comment>
<comment type="subcellular location">
    <subcellularLocation>
        <location evidence="1">Cytoplasm</location>
    </subcellularLocation>
</comment>
<comment type="similarity">
    <text evidence="1">Belongs to the HCP family.</text>
</comment>
<feature type="chain" id="PRO_1000092329" description="Hydroxylamine reductase">
    <location>
        <begin position="1"/>
        <end position="555"/>
    </location>
</feature>
<feature type="binding site" evidence="1">
    <location>
        <position position="3"/>
    </location>
    <ligand>
        <name>[4Fe-4S] cluster</name>
        <dbReference type="ChEBI" id="CHEBI:49883"/>
    </ligand>
</feature>
<feature type="binding site" evidence="1">
    <location>
        <position position="6"/>
    </location>
    <ligand>
        <name>[4Fe-4S] cluster</name>
        <dbReference type="ChEBI" id="CHEBI:49883"/>
    </ligand>
</feature>
<feature type="binding site" evidence="1">
    <location>
        <position position="18"/>
    </location>
    <ligand>
        <name>[4Fe-4S] cluster</name>
        <dbReference type="ChEBI" id="CHEBI:49883"/>
    </ligand>
</feature>
<feature type="binding site" evidence="1">
    <location>
        <position position="25"/>
    </location>
    <ligand>
        <name>[4Fe-4S] cluster</name>
        <dbReference type="ChEBI" id="CHEBI:49883"/>
    </ligand>
</feature>
<feature type="binding site" evidence="1">
    <location>
        <position position="252"/>
    </location>
    <ligand>
        <name>hybrid [4Fe-2O-2S] cluster</name>
        <dbReference type="ChEBI" id="CHEBI:60519"/>
    </ligand>
</feature>
<feature type="binding site" evidence="1">
    <location>
        <position position="276"/>
    </location>
    <ligand>
        <name>hybrid [4Fe-2O-2S] cluster</name>
        <dbReference type="ChEBI" id="CHEBI:60519"/>
    </ligand>
</feature>
<feature type="binding site" evidence="1">
    <location>
        <position position="320"/>
    </location>
    <ligand>
        <name>hybrid [4Fe-2O-2S] cluster</name>
        <dbReference type="ChEBI" id="CHEBI:60519"/>
    </ligand>
</feature>
<feature type="binding site" description="via persulfide group" evidence="1">
    <location>
        <position position="407"/>
    </location>
    <ligand>
        <name>hybrid [4Fe-2O-2S] cluster</name>
        <dbReference type="ChEBI" id="CHEBI:60519"/>
    </ligand>
</feature>
<feature type="binding site" evidence="1">
    <location>
        <position position="435"/>
    </location>
    <ligand>
        <name>hybrid [4Fe-2O-2S] cluster</name>
        <dbReference type="ChEBI" id="CHEBI:60519"/>
    </ligand>
</feature>
<feature type="binding site" evidence="1">
    <location>
        <position position="460"/>
    </location>
    <ligand>
        <name>hybrid [4Fe-2O-2S] cluster</name>
        <dbReference type="ChEBI" id="CHEBI:60519"/>
    </ligand>
</feature>
<feature type="binding site" evidence="1">
    <location>
        <position position="494"/>
    </location>
    <ligand>
        <name>hybrid [4Fe-2O-2S] cluster</name>
        <dbReference type="ChEBI" id="CHEBI:60519"/>
    </ligand>
</feature>
<feature type="binding site" evidence="1">
    <location>
        <position position="496"/>
    </location>
    <ligand>
        <name>hybrid [4Fe-2O-2S] cluster</name>
        <dbReference type="ChEBI" id="CHEBI:60519"/>
    </ligand>
</feature>
<feature type="modified residue" description="Cysteine persulfide" evidence="1">
    <location>
        <position position="407"/>
    </location>
</feature>
<evidence type="ECO:0000255" key="1">
    <source>
        <dbReference type="HAMAP-Rule" id="MF_00069"/>
    </source>
</evidence>
<keyword id="KW-0004">4Fe-4S</keyword>
<keyword id="KW-0963">Cytoplasm</keyword>
<keyword id="KW-0408">Iron</keyword>
<keyword id="KW-0411">Iron-sulfur</keyword>
<keyword id="KW-0479">Metal-binding</keyword>
<keyword id="KW-0560">Oxidoreductase</keyword>
<dbReference type="EC" id="1.7.99.1" evidence="1"/>
<dbReference type="EMBL" id="CP001026">
    <property type="protein sequence ID" value="ACB67011.1"/>
    <property type="molecule type" value="Genomic_DNA"/>
</dbReference>
<dbReference type="RefSeq" id="WP_011659085.1">
    <property type="nucleotide sequence ID" value="NC_010552.1"/>
</dbReference>
<dbReference type="SMR" id="B1YXE9"/>
<dbReference type="GeneID" id="93087062"/>
<dbReference type="KEGG" id="bac:BamMC406_4555"/>
<dbReference type="HOGENOM" id="CLU_038344_2_0_4"/>
<dbReference type="OrthoDB" id="9761526at2"/>
<dbReference type="Proteomes" id="UP000001680">
    <property type="component" value="Chromosome 2"/>
</dbReference>
<dbReference type="GO" id="GO:0005737">
    <property type="term" value="C:cytoplasm"/>
    <property type="evidence" value="ECO:0007669"/>
    <property type="project" value="UniProtKB-SubCell"/>
</dbReference>
<dbReference type="GO" id="GO:0051539">
    <property type="term" value="F:4 iron, 4 sulfur cluster binding"/>
    <property type="evidence" value="ECO:0007669"/>
    <property type="project" value="UniProtKB-KW"/>
</dbReference>
<dbReference type="GO" id="GO:0050418">
    <property type="term" value="F:hydroxylamine reductase activity"/>
    <property type="evidence" value="ECO:0007669"/>
    <property type="project" value="UniProtKB-UniRule"/>
</dbReference>
<dbReference type="GO" id="GO:0046872">
    <property type="term" value="F:metal ion binding"/>
    <property type="evidence" value="ECO:0007669"/>
    <property type="project" value="UniProtKB-KW"/>
</dbReference>
<dbReference type="GO" id="GO:0004601">
    <property type="term" value="F:peroxidase activity"/>
    <property type="evidence" value="ECO:0007669"/>
    <property type="project" value="TreeGrafter"/>
</dbReference>
<dbReference type="GO" id="GO:0042542">
    <property type="term" value="P:response to hydrogen peroxide"/>
    <property type="evidence" value="ECO:0007669"/>
    <property type="project" value="TreeGrafter"/>
</dbReference>
<dbReference type="CDD" id="cd01914">
    <property type="entry name" value="HCP"/>
    <property type="match status" value="1"/>
</dbReference>
<dbReference type="FunFam" id="1.20.1270.20:FF:000001">
    <property type="entry name" value="Hydroxylamine reductase"/>
    <property type="match status" value="1"/>
</dbReference>
<dbReference type="FunFam" id="3.40.50.2030:FF:000001">
    <property type="entry name" value="Hydroxylamine reductase"/>
    <property type="match status" value="1"/>
</dbReference>
<dbReference type="FunFam" id="3.40.50.2030:FF:000002">
    <property type="entry name" value="Hydroxylamine reductase"/>
    <property type="match status" value="1"/>
</dbReference>
<dbReference type="Gene3D" id="1.20.1270.20">
    <property type="match status" value="2"/>
</dbReference>
<dbReference type="Gene3D" id="3.40.50.2030">
    <property type="match status" value="2"/>
</dbReference>
<dbReference type="HAMAP" id="MF_00069">
    <property type="entry name" value="Hydroxylam_reduct"/>
    <property type="match status" value="1"/>
</dbReference>
<dbReference type="InterPro" id="IPR004137">
    <property type="entry name" value="HCP/CODH"/>
</dbReference>
<dbReference type="InterPro" id="IPR010048">
    <property type="entry name" value="Hydroxylam_reduct"/>
</dbReference>
<dbReference type="InterPro" id="IPR016099">
    <property type="entry name" value="Prismane-like_a/b-sand"/>
</dbReference>
<dbReference type="InterPro" id="IPR011254">
    <property type="entry name" value="Prismane-like_sf"/>
</dbReference>
<dbReference type="InterPro" id="IPR016100">
    <property type="entry name" value="Prismane_a-bundle"/>
</dbReference>
<dbReference type="NCBIfam" id="TIGR01703">
    <property type="entry name" value="hybrid_clust"/>
    <property type="match status" value="1"/>
</dbReference>
<dbReference type="NCBIfam" id="NF003658">
    <property type="entry name" value="PRK05290.1"/>
    <property type="match status" value="1"/>
</dbReference>
<dbReference type="PANTHER" id="PTHR30109">
    <property type="entry name" value="HYDROXYLAMINE REDUCTASE"/>
    <property type="match status" value="1"/>
</dbReference>
<dbReference type="PANTHER" id="PTHR30109:SF0">
    <property type="entry name" value="HYDROXYLAMINE REDUCTASE"/>
    <property type="match status" value="1"/>
</dbReference>
<dbReference type="Pfam" id="PF03063">
    <property type="entry name" value="Prismane"/>
    <property type="match status" value="1"/>
</dbReference>
<dbReference type="PIRSF" id="PIRSF000076">
    <property type="entry name" value="HCP"/>
    <property type="match status" value="1"/>
</dbReference>
<dbReference type="SUPFAM" id="SSF56821">
    <property type="entry name" value="Prismane protein-like"/>
    <property type="match status" value="1"/>
</dbReference>
<proteinExistence type="inferred from homology"/>
<protein>
    <recommendedName>
        <fullName evidence="1">Hydroxylamine reductase</fullName>
        <ecNumber evidence="1">1.7.99.1</ecNumber>
    </recommendedName>
    <alternativeName>
        <fullName evidence="1">Hybrid-cluster protein</fullName>
        <shortName evidence="1">HCP</shortName>
    </alternativeName>
    <alternativeName>
        <fullName evidence="1">Prismane protein</fullName>
    </alternativeName>
</protein>
<sequence length="555" mass="58896">MFCYQCEQTDRTGARPGCASAKGNCGKDSTTADLQDLLVHAVKGIAQYGAIARTMGVPDREAERFVLYAMFTTLTNVNFHAARFVALLREAAQTRDRVKAACEAHARAAGTAVPVLHGPAEWQPADDLAGLLKQAASVGIDAGLDTVGADIVGLRALVLYGLKGVCAYAHHAQVLGYERDDIYEGVDAALAFLAGNPADVDALLAHALDLGRLNLTVMELLDNANTGRFGVQQPSAVRVSPVAGKAILVSGHDLGDLHALLEQTAGTGIQVYTHGEMLPAHAYPSLKAFPHLAGNYGGAWQDQQSDFARFPGPILMTSNCIIEPLPQYRQRIFTTGPVGWPGVRHLEHHDFPTLIRAAQALPGFQATAPEQTITVGFGRHAVLGVADKVIDAVKAGQIRHFFLIGGCDGAAPGRNYYTEFAEQAPDDTVVMTLGCNKYRFNRHAFGDIGGIPRLLDIGQCNDSYSAIRIATALADAFECGVNDLPLSLVISWFEQKAAAVLLTLLALGIRNIRLGPTLPAFVTPGVLAVLVDQFGIQPIGDAGADLAAALARRAA</sequence>
<accession>B1YXE9</accession>
<name>HCP_BURA4</name>
<gene>
    <name evidence="1" type="primary">hcp</name>
    <name type="ordered locus">BamMC406_4555</name>
</gene>
<reference key="1">
    <citation type="submission" date="2008-04" db="EMBL/GenBank/DDBJ databases">
        <title>Complete sequence of chromosome 2 of Burkholderia ambifaria MC40-6.</title>
        <authorList>
            <person name="Copeland A."/>
            <person name="Lucas S."/>
            <person name="Lapidus A."/>
            <person name="Glavina del Rio T."/>
            <person name="Dalin E."/>
            <person name="Tice H."/>
            <person name="Pitluck S."/>
            <person name="Chain P."/>
            <person name="Malfatti S."/>
            <person name="Shin M."/>
            <person name="Vergez L."/>
            <person name="Lang D."/>
            <person name="Schmutz J."/>
            <person name="Larimer F."/>
            <person name="Land M."/>
            <person name="Hauser L."/>
            <person name="Kyrpides N."/>
            <person name="Lykidis A."/>
            <person name="Ramette A."/>
            <person name="Konstantinidis K."/>
            <person name="Tiedje J."/>
            <person name="Richardson P."/>
        </authorList>
    </citation>
    <scope>NUCLEOTIDE SEQUENCE [LARGE SCALE GENOMIC DNA]</scope>
    <source>
        <strain>MC40-6</strain>
    </source>
</reference>